<proteinExistence type="evidence at transcript level"/>
<name>ATPI_ANTAG</name>
<sequence>MYSAQSSISKLTNLCEISSVEVGQHFYWQIGGFQVHAQVLITSWIVIAILLGLAILATQNLQTIPTSGQNFVEYILEFIRDLTRTQIGEEEYRPWVPFIGTMFLFIFVSNWSGALLPWRIFELPHGELAAPTNDINTTVALALPTSVAYFYAGLRKKGLSYSGKYIQPTPILLPINILEDFTKPLPLSFRLFGNILADELVVAVPISLVPLVVPIPMMFLGLFTSAIQALIFATLAAAYIGESMEGHH</sequence>
<organism>
    <name type="scientific">Anthoceros angustus</name>
    <name type="common">Hornwort</name>
    <name type="synonym">Anthoceros formosae</name>
    <dbReference type="NCBI Taxonomy" id="48387"/>
    <lineage>
        <taxon>Eukaryota</taxon>
        <taxon>Viridiplantae</taxon>
        <taxon>Streptophyta</taxon>
        <taxon>Embryophyta</taxon>
        <taxon>Anthocerotophyta</taxon>
        <taxon>Anthocerotopsida</taxon>
        <taxon>Anthocerotidae</taxon>
        <taxon>Anthocerotales</taxon>
        <taxon>Anthocerotaceae</taxon>
        <taxon>Anthoceros</taxon>
    </lineage>
</organism>
<gene>
    <name evidence="1" type="primary">atpI</name>
</gene>
<geneLocation type="chloroplast"/>
<reference key="1">
    <citation type="journal article" date="2003" name="Nucleic Acids Res.">
        <title>The complete nucleotide sequence of the hornwort (Anthoceros formosae) chloroplast genome: insight into the earliest land plants.</title>
        <authorList>
            <person name="Kugita M."/>
            <person name="Kaneko A."/>
            <person name="Yamamoto Y."/>
            <person name="Takeya Y."/>
            <person name="Matsumoto T."/>
            <person name="Yoshinaga K."/>
        </authorList>
    </citation>
    <scope>NUCLEOTIDE SEQUENCE [LARGE SCALE GENOMIC DNA]</scope>
    <scope>RNA EDITING</scope>
</reference>
<reference key="2">
    <citation type="journal article" date="2003" name="Nucleic Acids Res.">
        <title>RNA editing in hornwort chloroplasts makes more than half the genes functional.</title>
        <authorList>
            <person name="Kugita M."/>
            <person name="Yamamoto Y."/>
            <person name="Fujikawa T."/>
            <person name="Matsumoto T."/>
            <person name="Yoshinaga K."/>
        </authorList>
    </citation>
    <scope>NUCLEOTIDE SEQUENCE [MRNA]</scope>
    <scope>RNA EDITING</scope>
    <source>
        <tissue>Thallus</tissue>
    </source>
</reference>
<evidence type="ECO:0000255" key="1">
    <source>
        <dbReference type="HAMAP-Rule" id="MF_01393"/>
    </source>
</evidence>
<evidence type="ECO:0000269" key="2">
    <source>
    </source>
</evidence>
<evidence type="ECO:0000269" key="3">
    <source>
    </source>
</evidence>
<keyword id="KW-0066">ATP synthesis</keyword>
<keyword id="KW-0138">CF(0)</keyword>
<keyword id="KW-0150">Chloroplast</keyword>
<keyword id="KW-0375">Hydrogen ion transport</keyword>
<keyword id="KW-0406">Ion transport</keyword>
<keyword id="KW-0472">Membrane</keyword>
<keyword id="KW-0934">Plastid</keyword>
<keyword id="KW-0691">RNA editing</keyword>
<keyword id="KW-0793">Thylakoid</keyword>
<keyword id="KW-0812">Transmembrane</keyword>
<keyword id="KW-1133">Transmembrane helix</keyword>
<keyword id="KW-0813">Transport</keyword>
<feature type="chain" id="PRO_0000002576" description="ATP synthase subunit a, chloroplastic">
    <location>
        <begin position="1"/>
        <end position="248"/>
    </location>
</feature>
<feature type="transmembrane region" description="Helical" evidence="1">
    <location>
        <begin position="37"/>
        <end position="57"/>
    </location>
</feature>
<feature type="transmembrane region" description="Helical" evidence="1">
    <location>
        <begin position="96"/>
        <end position="116"/>
    </location>
</feature>
<feature type="transmembrane region" description="Helical" evidence="1">
    <location>
        <begin position="134"/>
        <end position="154"/>
    </location>
</feature>
<feature type="transmembrane region" description="Helical" evidence="1">
    <location>
        <begin position="200"/>
        <end position="220"/>
    </location>
</feature>
<feature type="transmembrane region" description="Helical" evidence="1">
    <location>
        <begin position="221"/>
        <end position="241"/>
    </location>
</feature>
<accession>Q85AE6</accession>
<protein>
    <recommendedName>
        <fullName evidence="1">ATP synthase subunit a, chloroplastic</fullName>
    </recommendedName>
    <alternativeName>
        <fullName evidence="1">ATP synthase F0 sector subunit a</fullName>
    </alternativeName>
    <alternativeName>
        <fullName evidence="1">F-ATPase subunit IV</fullName>
    </alternativeName>
</protein>
<comment type="function">
    <text evidence="1">Key component of the proton channel; it plays a direct role in the translocation of protons across the membrane.</text>
</comment>
<comment type="subunit">
    <text evidence="1">F-type ATPases have 2 components, CF(1) - the catalytic core - and CF(0) - the membrane proton channel. CF(1) has five subunits: alpha(3), beta(3), gamma(1), delta(1), epsilon(1). CF(0) has four main subunits: a, b, b' and c.</text>
</comment>
<comment type="subcellular location">
    <subcellularLocation>
        <location evidence="1">Plastid</location>
        <location evidence="1">Chloroplast thylakoid membrane</location>
        <topology evidence="1">Multi-pass membrane protein</topology>
    </subcellularLocation>
</comment>
<comment type="RNA editing">
    <location>
        <position position="24" evidence="2 3"/>
    </location>
    <location>
        <position position="36" evidence="2 3"/>
    </location>
    <location>
        <position position="38" evidence="2 3"/>
    </location>
    <location>
        <position position="40" evidence="2 3"/>
    </location>
    <location>
        <position position="44" evidence="2 3"/>
    </location>
    <location>
        <position position="53" evidence="2 3"/>
    </location>
    <location>
        <position position="55" evidence="2 3"/>
    </location>
    <location>
        <position position="59" evidence="2 3"/>
    </location>
    <location>
        <position position="86" evidence="2 3"/>
    </location>
    <location>
        <position position="105" evidence="2 3"/>
    </location>
    <location>
        <position position="106" evidence="2 3"/>
    </location>
    <location>
        <position position="115" evidence="2 3"/>
    </location>
    <location>
        <position position="141" evidence="2 3"/>
    </location>
    <location>
        <position position="146" evidence="2 3"/>
    </location>
    <location>
        <position position="184" evidence="2 3"/>
    </location>
    <location>
        <position position="220" evidence="2 3"/>
    </location>
    <location>
        <position position="228" evidence="2 3"/>
    </location>
    <location>
        <position position="232" evidence="2 3"/>
    </location>
    <text>The nonsense codons at positions 24, 38, 59, 86 and 228 are modified to sense codons.</text>
</comment>
<comment type="similarity">
    <text evidence="1">Belongs to the ATPase A chain family.</text>
</comment>
<dbReference type="EMBL" id="AB086179">
    <property type="protein sequence ID" value="BAC55330.1"/>
    <property type="molecule type" value="Genomic_DNA"/>
</dbReference>
<dbReference type="EMBL" id="AB087422">
    <property type="protein sequence ID" value="BAC55421.1"/>
    <property type="molecule type" value="mRNA"/>
</dbReference>
<dbReference type="RefSeq" id="NP_777394.1">
    <property type="nucleotide sequence ID" value="NC_004543.1"/>
</dbReference>
<dbReference type="SMR" id="Q85AE6"/>
<dbReference type="GeneID" id="2553485"/>
<dbReference type="GO" id="GO:0009535">
    <property type="term" value="C:chloroplast thylakoid membrane"/>
    <property type="evidence" value="ECO:0007669"/>
    <property type="project" value="UniProtKB-SubCell"/>
</dbReference>
<dbReference type="GO" id="GO:0005886">
    <property type="term" value="C:plasma membrane"/>
    <property type="evidence" value="ECO:0007669"/>
    <property type="project" value="UniProtKB-UniRule"/>
</dbReference>
<dbReference type="GO" id="GO:0045259">
    <property type="term" value="C:proton-transporting ATP synthase complex"/>
    <property type="evidence" value="ECO:0007669"/>
    <property type="project" value="UniProtKB-KW"/>
</dbReference>
<dbReference type="GO" id="GO:0046933">
    <property type="term" value="F:proton-transporting ATP synthase activity, rotational mechanism"/>
    <property type="evidence" value="ECO:0007669"/>
    <property type="project" value="UniProtKB-UniRule"/>
</dbReference>
<dbReference type="CDD" id="cd00310">
    <property type="entry name" value="ATP-synt_Fo_a_6"/>
    <property type="match status" value="1"/>
</dbReference>
<dbReference type="FunFam" id="1.20.120.220:FF:000001">
    <property type="entry name" value="ATP synthase subunit a, chloroplastic"/>
    <property type="match status" value="1"/>
</dbReference>
<dbReference type="Gene3D" id="1.20.120.220">
    <property type="entry name" value="ATP synthase, F0 complex, subunit A"/>
    <property type="match status" value="1"/>
</dbReference>
<dbReference type="HAMAP" id="MF_01393">
    <property type="entry name" value="ATP_synth_a_bact"/>
    <property type="match status" value="1"/>
</dbReference>
<dbReference type="InterPro" id="IPR045082">
    <property type="entry name" value="ATP_syn_F0_a_bact/chloroplast"/>
</dbReference>
<dbReference type="InterPro" id="IPR000568">
    <property type="entry name" value="ATP_synth_F0_asu"/>
</dbReference>
<dbReference type="InterPro" id="IPR035908">
    <property type="entry name" value="F0_ATP_A_sf"/>
</dbReference>
<dbReference type="NCBIfam" id="TIGR01131">
    <property type="entry name" value="ATP_synt_6_or_A"/>
    <property type="match status" value="1"/>
</dbReference>
<dbReference type="PANTHER" id="PTHR42823">
    <property type="entry name" value="ATP SYNTHASE SUBUNIT A, CHLOROPLASTIC"/>
    <property type="match status" value="1"/>
</dbReference>
<dbReference type="PANTHER" id="PTHR42823:SF3">
    <property type="entry name" value="ATP SYNTHASE SUBUNIT A, CHLOROPLASTIC"/>
    <property type="match status" value="1"/>
</dbReference>
<dbReference type="Pfam" id="PF00119">
    <property type="entry name" value="ATP-synt_A"/>
    <property type="match status" value="1"/>
</dbReference>
<dbReference type="PRINTS" id="PR00123">
    <property type="entry name" value="ATPASEA"/>
</dbReference>
<dbReference type="SUPFAM" id="SSF81336">
    <property type="entry name" value="F1F0 ATP synthase subunit A"/>
    <property type="match status" value="1"/>
</dbReference>